<comment type="function">
    <text>Protects cells and enzymes from oxidative damage, by catalyzing the reduction of hydrogen peroxide, lipid peroxides and organic hydroperoxide, by glutathione. May constitute a glutathione peroxidase-like protective system against peroxide damage in sperm membrane lipids.</text>
</comment>
<comment type="catalytic activity">
    <reaction>
        <text>2 glutathione + H2O2 = glutathione disulfide + 2 H2O</text>
        <dbReference type="Rhea" id="RHEA:16833"/>
        <dbReference type="ChEBI" id="CHEBI:15377"/>
        <dbReference type="ChEBI" id="CHEBI:16240"/>
        <dbReference type="ChEBI" id="CHEBI:57925"/>
        <dbReference type="ChEBI" id="CHEBI:58297"/>
        <dbReference type="EC" id="1.11.1.9"/>
    </reaction>
</comment>
<comment type="subcellular location">
    <subcellularLocation>
        <location>Secreted</location>
    </subcellularLocation>
</comment>
<comment type="tissue specificity">
    <text>Epididymis.</text>
</comment>
<comment type="similarity">
    <text evidence="3">Belongs to the glutathione peroxidase family.</text>
</comment>
<organism>
    <name type="scientific">Macaca fascicularis</name>
    <name type="common">Crab-eating macaque</name>
    <name type="synonym">Cynomolgus monkey</name>
    <dbReference type="NCBI Taxonomy" id="9541"/>
    <lineage>
        <taxon>Eukaryota</taxon>
        <taxon>Metazoa</taxon>
        <taxon>Chordata</taxon>
        <taxon>Craniata</taxon>
        <taxon>Vertebrata</taxon>
        <taxon>Euteleostomi</taxon>
        <taxon>Mammalia</taxon>
        <taxon>Eutheria</taxon>
        <taxon>Euarchontoglires</taxon>
        <taxon>Primates</taxon>
        <taxon>Haplorrhini</taxon>
        <taxon>Catarrhini</taxon>
        <taxon>Cercopithecidae</taxon>
        <taxon>Cercopithecinae</taxon>
        <taxon>Macaca</taxon>
    </lineage>
</organism>
<dbReference type="EC" id="1.11.1.9"/>
<dbReference type="EMBL" id="X62403">
    <property type="protein sequence ID" value="CAA44273.1"/>
    <property type="molecule type" value="mRNA"/>
</dbReference>
<dbReference type="PIR" id="S24327">
    <property type="entry name" value="S24327"/>
</dbReference>
<dbReference type="RefSeq" id="NP_001274571.1">
    <property type="nucleotide sequence ID" value="NM_001287642.1"/>
</dbReference>
<dbReference type="SMR" id="P28714"/>
<dbReference type="STRING" id="9541.ENSMFAP00000035112"/>
<dbReference type="PeroxiBase" id="3738">
    <property type="entry name" value="MfaGPx05"/>
</dbReference>
<dbReference type="Ensembl" id="ENSMFAT00000009347.2">
    <property type="protein sequence ID" value="ENSMFAP00000035112.1"/>
    <property type="gene ID" value="ENSMFAG00000004017.2"/>
</dbReference>
<dbReference type="VEuPathDB" id="HostDB:ENSMFAG00000004017"/>
<dbReference type="eggNOG" id="KOG1651">
    <property type="taxonomic scope" value="Eukaryota"/>
</dbReference>
<dbReference type="GeneTree" id="ENSGT00940000164550"/>
<dbReference type="OMA" id="HELMNGI"/>
<dbReference type="Proteomes" id="UP000233100">
    <property type="component" value="Chromosome 4"/>
</dbReference>
<dbReference type="GO" id="GO:0005576">
    <property type="term" value="C:extracellular region"/>
    <property type="evidence" value="ECO:0007669"/>
    <property type="project" value="UniProtKB-SubCell"/>
</dbReference>
<dbReference type="GO" id="GO:0004602">
    <property type="term" value="F:glutathione peroxidase activity"/>
    <property type="evidence" value="ECO:0007669"/>
    <property type="project" value="UniProtKB-EC"/>
</dbReference>
<dbReference type="GO" id="GO:0006979">
    <property type="term" value="P:response to oxidative stress"/>
    <property type="evidence" value="ECO:0007669"/>
    <property type="project" value="InterPro"/>
</dbReference>
<dbReference type="CDD" id="cd00340">
    <property type="entry name" value="GSH_Peroxidase"/>
    <property type="match status" value="1"/>
</dbReference>
<dbReference type="FunFam" id="3.40.30.10:FF:000112">
    <property type="entry name" value="Glutathione peroxidase"/>
    <property type="match status" value="1"/>
</dbReference>
<dbReference type="Gene3D" id="3.40.30.10">
    <property type="entry name" value="Glutaredoxin"/>
    <property type="match status" value="1"/>
</dbReference>
<dbReference type="InterPro" id="IPR000889">
    <property type="entry name" value="Glutathione_peroxidase"/>
</dbReference>
<dbReference type="InterPro" id="IPR029759">
    <property type="entry name" value="GPX_AS"/>
</dbReference>
<dbReference type="InterPro" id="IPR029760">
    <property type="entry name" value="GPX_CS"/>
</dbReference>
<dbReference type="InterPro" id="IPR036249">
    <property type="entry name" value="Thioredoxin-like_sf"/>
</dbReference>
<dbReference type="PANTHER" id="PTHR11592:SF127">
    <property type="entry name" value="EPIDIDYMAL SECRETORY GLUTATHIONE PEROXIDASE"/>
    <property type="match status" value="1"/>
</dbReference>
<dbReference type="PANTHER" id="PTHR11592">
    <property type="entry name" value="GLUTATHIONE PEROXIDASE"/>
    <property type="match status" value="1"/>
</dbReference>
<dbReference type="Pfam" id="PF00255">
    <property type="entry name" value="GSHPx"/>
    <property type="match status" value="1"/>
</dbReference>
<dbReference type="PIRSF" id="PIRSF000303">
    <property type="entry name" value="Glutathion_perox"/>
    <property type="match status" value="1"/>
</dbReference>
<dbReference type="PRINTS" id="PR01011">
    <property type="entry name" value="GLUTPROXDASE"/>
</dbReference>
<dbReference type="SUPFAM" id="SSF52833">
    <property type="entry name" value="Thioredoxin-like"/>
    <property type="match status" value="1"/>
</dbReference>
<dbReference type="PROSITE" id="PS00460">
    <property type="entry name" value="GLUTATHIONE_PEROXID_1"/>
    <property type="match status" value="1"/>
</dbReference>
<dbReference type="PROSITE" id="PS00763">
    <property type="entry name" value="GLUTATHIONE_PEROXID_2"/>
    <property type="match status" value="1"/>
</dbReference>
<dbReference type="PROSITE" id="PS51355">
    <property type="entry name" value="GLUTATHIONE_PEROXID_3"/>
    <property type="match status" value="1"/>
</dbReference>
<name>GPX5_MACFA</name>
<feature type="signal peptide" evidence="2">
    <location>
        <begin position="1"/>
        <end position="21"/>
    </location>
</feature>
<feature type="chain" id="PRO_0000013077" description="Epididymal secretory glutathione peroxidase">
    <location>
        <begin position="22"/>
        <end position="221"/>
    </location>
</feature>
<feature type="active site" evidence="1">
    <location>
        <position position="73"/>
    </location>
</feature>
<gene>
    <name type="primary">GPX5</name>
</gene>
<accession>P28714</accession>
<keyword id="KW-0560">Oxidoreductase</keyword>
<keyword id="KW-0575">Peroxidase</keyword>
<keyword id="KW-1185">Reference proteome</keyword>
<keyword id="KW-0964">Secreted</keyword>
<keyword id="KW-0732">Signal</keyword>
<reference key="1">
    <citation type="journal article" date="1992" name="Biochem. J.">
        <title>Genetic evidence for an androgen-regulated epididymal secretory glutathione peroxidase whose transcript does not contain a selenocysteine codon.</title>
        <authorList>
            <person name="Perry A.C.F."/>
            <person name="Jones R."/>
            <person name="Niang L.S.P."/>
            <person name="Jackson R.M."/>
            <person name="Hall L."/>
        </authorList>
    </citation>
    <scope>NUCLEOTIDE SEQUENCE [MRNA]</scope>
    <source>
        <tissue>Epididymis</tissue>
    </source>
</reference>
<protein>
    <recommendedName>
        <fullName>Epididymal secretory glutathione peroxidase</fullName>
        <ecNumber>1.11.1.9</ecNumber>
    </recommendedName>
    <alternativeName>
        <fullName>Epididymis-specific glutathione peroxidase-like protein</fullName>
        <shortName>EGLP</shortName>
    </alternativeName>
    <alternativeName>
        <fullName>Glutathione peroxidase 5</fullName>
        <shortName>GPx-5</shortName>
        <shortName>GSHPx-5</shortName>
    </alternativeName>
</protein>
<evidence type="ECO:0000250" key="1"/>
<evidence type="ECO:0000255" key="2"/>
<evidence type="ECO:0000305" key="3"/>
<proteinExistence type="evidence at transcript level"/>
<sequence>MTTQLRVVHLLPLLLACFVQTSPKQETMKMDCHKDEKGTIYDYEAIALNKNEYVPFKQYVGKHILFVNVATYCGLTAQYPELNALQEELKPYGLVVLGFPCNQFGKQEPGDNKEILPGLKYVRPGGGFVPNFQLFEKGDVNGEKEQKVFSFLKHSCPHPSEILGTFKSISWDPVKVHDIRWNFEKFLVGPDGIPVMRWSHRATVSSVKTDILAYLKQFKTK</sequence>